<gene>
    <name evidence="5 7" type="primary">MTCH2</name>
    <name evidence="4" type="synonym">MIMP</name>
    <name type="ORF">HSPC032</name>
</gene>
<reference key="1">
    <citation type="journal article" date="2002" name="Neoplasia">
        <title>Met-HGF/SF signal transduction induces mimp, a novel mitochondrial carrier homologue, which leads to mitochondrial depolarization.</title>
        <authorList>
            <person name="Yerushalmi G.M."/>
            <person name="Leibowitz-Amit R."/>
            <person name="Shaharabany M."/>
            <person name="Tsarfaty I."/>
        </authorList>
    </citation>
    <scope>NUCLEOTIDE SEQUENCE [MRNA]</scope>
</reference>
<reference key="2">
    <citation type="submission" date="1999-08" db="EMBL/GenBank/DDBJ databases">
        <title>Identification of an evolutionary conserved mitochondrial carrier family from various organisms.</title>
        <authorList>
            <person name="Jang J.S."/>
            <person name="Hahn Y."/>
            <person name="Park C."/>
            <person name="Chung J.H."/>
        </authorList>
    </citation>
    <scope>NUCLEOTIDE SEQUENCE [MRNA]</scope>
</reference>
<reference key="3">
    <citation type="journal article" date="2000" name="Genome Res.">
        <title>Cloning and functional analysis of cDNAs with open reading frames for 300 previously undefined genes expressed in CD34+ hematopoietic stem/progenitor cells.</title>
        <authorList>
            <person name="Zhang Q.-H."/>
            <person name="Ye M."/>
            <person name="Wu X.-Y."/>
            <person name="Ren S.-X."/>
            <person name="Zhao M."/>
            <person name="Zhao C.-J."/>
            <person name="Fu G."/>
            <person name="Shen Y."/>
            <person name="Fan H.-Y."/>
            <person name="Lu G."/>
            <person name="Zhong M."/>
            <person name="Xu X.-R."/>
            <person name="Han Z.-G."/>
            <person name="Zhang J.-W."/>
            <person name="Tao J."/>
            <person name="Huang Q.-H."/>
            <person name="Zhou J."/>
            <person name="Hu G.-X."/>
            <person name="Gu J."/>
            <person name="Chen S.-J."/>
            <person name="Chen Z."/>
        </authorList>
    </citation>
    <scope>NUCLEOTIDE SEQUENCE [LARGE SCALE MRNA]</scope>
    <source>
        <tissue>Umbilical cord blood</tissue>
    </source>
</reference>
<reference key="4">
    <citation type="journal article" date="2004" name="Nat. Genet.">
        <title>Complete sequencing and characterization of 21,243 full-length human cDNAs.</title>
        <authorList>
            <person name="Ota T."/>
            <person name="Suzuki Y."/>
            <person name="Nishikawa T."/>
            <person name="Otsuki T."/>
            <person name="Sugiyama T."/>
            <person name="Irie R."/>
            <person name="Wakamatsu A."/>
            <person name="Hayashi K."/>
            <person name="Sato H."/>
            <person name="Nagai K."/>
            <person name="Kimura K."/>
            <person name="Makita H."/>
            <person name="Sekine M."/>
            <person name="Obayashi M."/>
            <person name="Nishi T."/>
            <person name="Shibahara T."/>
            <person name="Tanaka T."/>
            <person name="Ishii S."/>
            <person name="Yamamoto J."/>
            <person name="Saito K."/>
            <person name="Kawai Y."/>
            <person name="Isono Y."/>
            <person name="Nakamura Y."/>
            <person name="Nagahari K."/>
            <person name="Murakami K."/>
            <person name="Yasuda T."/>
            <person name="Iwayanagi T."/>
            <person name="Wagatsuma M."/>
            <person name="Shiratori A."/>
            <person name="Sudo H."/>
            <person name="Hosoiri T."/>
            <person name="Kaku Y."/>
            <person name="Kodaira H."/>
            <person name="Kondo H."/>
            <person name="Sugawara M."/>
            <person name="Takahashi M."/>
            <person name="Kanda K."/>
            <person name="Yokoi T."/>
            <person name="Furuya T."/>
            <person name="Kikkawa E."/>
            <person name="Omura Y."/>
            <person name="Abe K."/>
            <person name="Kamihara K."/>
            <person name="Katsuta N."/>
            <person name="Sato K."/>
            <person name="Tanikawa M."/>
            <person name="Yamazaki M."/>
            <person name="Ninomiya K."/>
            <person name="Ishibashi T."/>
            <person name="Yamashita H."/>
            <person name="Murakawa K."/>
            <person name="Fujimori K."/>
            <person name="Tanai H."/>
            <person name="Kimata M."/>
            <person name="Watanabe M."/>
            <person name="Hiraoka S."/>
            <person name="Chiba Y."/>
            <person name="Ishida S."/>
            <person name="Ono Y."/>
            <person name="Takiguchi S."/>
            <person name="Watanabe S."/>
            <person name="Yosida M."/>
            <person name="Hotuta T."/>
            <person name="Kusano J."/>
            <person name="Kanehori K."/>
            <person name="Takahashi-Fujii A."/>
            <person name="Hara H."/>
            <person name="Tanase T.-O."/>
            <person name="Nomura Y."/>
            <person name="Togiya S."/>
            <person name="Komai F."/>
            <person name="Hara R."/>
            <person name="Takeuchi K."/>
            <person name="Arita M."/>
            <person name="Imose N."/>
            <person name="Musashino K."/>
            <person name="Yuuki H."/>
            <person name="Oshima A."/>
            <person name="Sasaki N."/>
            <person name="Aotsuka S."/>
            <person name="Yoshikawa Y."/>
            <person name="Matsunawa H."/>
            <person name="Ichihara T."/>
            <person name="Shiohata N."/>
            <person name="Sano S."/>
            <person name="Moriya S."/>
            <person name="Momiyama H."/>
            <person name="Satoh N."/>
            <person name="Takami S."/>
            <person name="Terashima Y."/>
            <person name="Suzuki O."/>
            <person name="Nakagawa S."/>
            <person name="Senoh A."/>
            <person name="Mizoguchi H."/>
            <person name="Goto Y."/>
            <person name="Shimizu F."/>
            <person name="Wakebe H."/>
            <person name="Hishigaki H."/>
            <person name="Watanabe T."/>
            <person name="Sugiyama A."/>
            <person name="Takemoto M."/>
            <person name="Kawakami B."/>
            <person name="Yamazaki M."/>
            <person name="Watanabe K."/>
            <person name="Kumagai A."/>
            <person name="Itakura S."/>
            <person name="Fukuzumi Y."/>
            <person name="Fujimori Y."/>
            <person name="Komiyama M."/>
            <person name="Tashiro H."/>
            <person name="Tanigami A."/>
            <person name="Fujiwara T."/>
            <person name="Ono T."/>
            <person name="Yamada K."/>
            <person name="Fujii Y."/>
            <person name="Ozaki K."/>
            <person name="Hirao M."/>
            <person name="Ohmori Y."/>
            <person name="Kawabata A."/>
            <person name="Hikiji T."/>
            <person name="Kobatake N."/>
            <person name="Inagaki H."/>
            <person name="Ikema Y."/>
            <person name="Okamoto S."/>
            <person name="Okitani R."/>
            <person name="Kawakami T."/>
            <person name="Noguchi S."/>
            <person name="Itoh T."/>
            <person name="Shigeta K."/>
            <person name="Senba T."/>
            <person name="Matsumura K."/>
            <person name="Nakajima Y."/>
            <person name="Mizuno T."/>
            <person name="Morinaga M."/>
            <person name="Sasaki M."/>
            <person name="Togashi T."/>
            <person name="Oyama M."/>
            <person name="Hata H."/>
            <person name="Watanabe M."/>
            <person name="Komatsu T."/>
            <person name="Mizushima-Sugano J."/>
            <person name="Satoh T."/>
            <person name="Shirai Y."/>
            <person name="Takahashi Y."/>
            <person name="Nakagawa K."/>
            <person name="Okumura K."/>
            <person name="Nagase T."/>
            <person name="Nomura N."/>
            <person name="Kikuchi H."/>
            <person name="Masuho Y."/>
            <person name="Yamashita R."/>
            <person name="Nakai K."/>
            <person name="Yada T."/>
            <person name="Nakamura Y."/>
            <person name="Ohara O."/>
            <person name="Isogai T."/>
            <person name="Sugano S."/>
        </authorList>
    </citation>
    <scope>NUCLEOTIDE SEQUENCE [LARGE SCALE MRNA]</scope>
    <source>
        <tissue>Amygdala</tissue>
    </source>
</reference>
<reference key="5">
    <citation type="submission" date="2005-09" db="EMBL/GenBank/DDBJ databases">
        <authorList>
            <person name="Mural R.J."/>
            <person name="Istrail S."/>
            <person name="Sutton G.G."/>
            <person name="Florea L."/>
            <person name="Halpern A.L."/>
            <person name="Mobarry C.M."/>
            <person name="Lippert R."/>
            <person name="Walenz B."/>
            <person name="Shatkay H."/>
            <person name="Dew I."/>
            <person name="Miller J.R."/>
            <person name="Flanigan M.J."/>
            <person name="Edwards N.J."/>
            <person name="Bolanos R."/>
            <person name="Fasulo D."/>
            <person name="Halldorsson B.V."/>
            <person name="Hannenhalli S."/>
            <person name="Turner R."/>
            <person name="Yooseph S."/>
            <person name="Lu F."/>
            <person name="Nusskern D.R."/>
            <person name="Shue B.C."/>
            <person name="Zheng X.H."/>
            <person name="Zhong F."/>
            <person name="Delcher A.L."/>
            <person name="Huson D.H."/>
            <person name="Kravitz S.A."/>
            <person name="Mouchard L."/>
            <person name="Reinert K."/>
            <person name="Remington K.A."/>
            <person name="Clark A.G."/>
            <person name="Waterman M.S."/>
            <person name="Eichler E.E."/>
            <person name="Adams M.D."/>
            <person name="Hunkapiller M.W."/>
            <person name="Myers E.W."/>
            <person name="Venter J.C."/>
        </authorList>
    </citation>
    <scope>NUCLEOTIDE SEQUENCE [LARGE SCALE GENOMIC DNA]</scope>
</reference>
<reference key="6">
    <citation type="journal article" date="2004" name="Genome Res.">
        <title>The status, quality, and expansion of the NIH full-length cDNA project: the Mammalian Gene Collection (MGC).</title>
        <authorList>
            <consortium name="The MGC Project Team"/>
        </authorList>
    </citation>
    <scope>NUCLEOTIDE SEQUENCE [LARGE SCALE MRNA]</scope>
    <source>
        <tissue>Cervix</tissue>
    </source>
</reference>
<reference key="7">
    <citation type="submission" date="2005-06" db="UniProtKB">
        <authorList>
            <person name="Bienvenut W.V."/>
        </authorList>
    </citation>
    <scope>PROTEIN SEQUENCE OF 78-90; 112-122; 132-155 AND 281-287</scope>
    <scope>IDENTIFICATION BY MASS SPECTROMETRY</scope>
    <source>
        <tissue>B-cell lymphoma</tissue>
    </source>
</reference>
<reference key="8">
    <citation type="journal article" date="2009" name="Anal. Chem.">
        <title>Lys-N and trypsin cover complementary parts of the phosphoproteome in a refined SCX-based approach.</title>
        <authorList>
            <person name="Gauci S."/>
            <person name="Helbig A.O."/>
            <person name="Slijper M."/>
            <person name="Krijgsveld J."/>
            <person name="Heck A.J."/>
            <person name="Mohammed S."/>
        </authorList>
    </citation>
    <scope>ACETYLATION [LARGE SCALE ANALYSIS] AT ALA-2</scope>
    <scope>CLEAVAGE OF INITIATOR METHIONINE [LARGE SCALE ANALYSIS]</scope>
    <scope>IDENTIFICATION BY MASS SPECTROMETRY [LARGE SCALE ANALYSIS]</scope>
</reference>
<reference key="9">
    <citation type="journal article" date="2011" name="BMC Syst. Biol.">
        <title>Initial characterization of the human central proteome.</title>
        <authorList>
            <person name="Burkard T.R."/>
            <person name="Planyavsky M."/>
            <person name="Kaupe I."/>
            <person name="Breitwieser F.P."/>
            <person name="Buerckstuemmer T."/>
            <person name="Bennett K.L."/>
            <person name="Superti-Furga G."/>
            <person name="Colinge J."/>
        </authorList>
    </citation>
    <scope>IDENTIFICATION BY MASS SPECTROMETRY [LARGE SCALE ANALYSIS]</scope>
</reference>
<reference key="10">
    <citation type="journal article" date="2014" name="J. Proteomics">
        <title>An enzyme assisted RP-RPLC approach for in-depth analysis of human liver phosphoproteome.</title>
        <authorList>
            <person name="Bian Y."/>
            <person name="Song C."/>
            <person name="Cheng K."/>
            <person name="Dong M."/>
            <person name="Wang F."/>
            <person name="Huang J."/>
            <person name="Sun D."/>
            <person name="Wang L."/>
            <person name="Ye M."/>
            <person name="Zou H."/>
        </authorList>
    </citation>
    <scope>IDENTIFICATION BY MASS SPECTROMETRY [LARGE SCALE ANALYSIS]</scope>
    <source>
        <tissue>Liver</tissue>
    </source>
</reference>
<reference key="11">
    <citation type="journal article" date="2015" name="Proteomics">
        <title>N-terminome analysis of the human mitochondrial proteome.</title>
        <authorList>
            <person name="Vaca Jacome A.S."/>
            <person name="Rabilloud T."/>
            <person name="Schaeffer-Reiss C."/>
            <person name="Rompais M."/>
            <person name="Ayoub D."/>
            <person name="Lane L."/>
            <person name="Bairoch A."/>
            <person name="Van Dorsselaer A."/>
            <person name="Carapito C."/>
        </authorList>
    </citation>
    <scope>ACETYLATION [LARGE SCALE ANALYSIS] AT ALA-2</scope>
    <scope>CLEAVAGE OF INITIATOR METHIONINE [LARGE SCALE ANALYSIS]</scope>
    <scope>IDENTIFICATION BY MASS SPECTROMETRY [LARGE SCALE ANALYSIS]</scope>
</reference>
<reference key="12">
    <citation type="journal article" date="2022" name="Science">
        <title>MTCH2 is a mitochondrial outer membrane protein insertase.</title>
        <authorList>
            <person name="Guna A."/>
            <person name="Stevens T.A."/>
            <person name="Inglis A.J."/>
            <person name="Replogle J.M."/>
            <person name="Esantsi T.K."/>
            <person name="Muthukumar G."/>
            <person name="Shaffer K.C.L."/>
            <person name="Wang M.L."/>
            <person name="Pogson A.N."/>
            <person name="Jones J.J."/>
            <person name="Lomenick B."/>
            <person name="Chou T.F."/>
            <person name="Weissman J.S."/>
            <person name="Voorhees R.M."/>
        </authorList>
    </citation>
    <scope>FUNCTION</scope>
    <scope>SUBCELLULAR LOCATION</scope>
    <scope>MUTAGENESIS OF LYS-25 AND ASP-189</scope>
</reference>
<name>MTCH2_HUMAN</name>
<feature type="initiator methionine" description="Removed" evidence="8 9">
    <location>
        <position position="1"/>
    </location>
</feature>
<feature type="chain" id="PRO_0000090637" description="Mitochondrial carrier homolog 2">
    <location>
        <begin position="2"/>
        <end position="303"/>
    </location>
</feature>
<feature type="topological domain" description="Mitochondrial intermembrane" evidence="6">
    <location>
        <begin position="2"/>
        <end position="15"/>
    </location>
</feature>
<feature type="transmembrane region" description="Helical; Name=1" evidence="2">
    <location>
        <begin position="16"/>
        <end position="36"/>
    </location>
</feature>
<feature type="topological domain" description="Cytoplasmic" evidence="6">
    <location>
        <begin position="37"/>
        <end position="77"/>
    </location>
</feature>
<feature type="transmembrane region" description="Helical; Name=2" evidence="2">
    <location>
        <begin position="78"/>
        <end position="92"/>
    </location>
</feature>
<feature type="topological domain" description="Mitochondrial intermembrane" evidence="6">
    <location>
        <begin position="93"/>
        <end position="135"/>
    </location>
</feature>
<feature type="transmembrane region" description="Helical; Name=3" evidence="2">
    <location>
        <begin position="136"/>
        <end position="156"/>
    </location>
</feature>
<feature type="topological domain" description="Cytoplasmic" evidence="6">
    <location>
        <begin position="157"/>
        <end position="180"/>
    </location>
</feature>
<feature type="transmembrane region" description="Helical; Name=4" evidence="2">
    <location>
        <begin position="181"/>
        <end position="199"/>
    </location>
</feature>
<feature type="topological domain" description="Mitochondrial intermembrane" evidence="6">
    <location>
        <begin position="200"/>
        <end position="231"/>
    </location>
</feature>
<feature type="transmembrane region" description="Helical; Name=5" evidence="2">
    <location>
        <begin position="232"/>
        <end position="252"/>
    </location>
</feature>
<feature type="topological domain" description="Cytoplasmic" evidence="6">
    <location>
        <begin position="253"/>
        <end position="280"/>
    </location>
</feature>
<feature type="transmembrane region" description="Helical; Name=6" evidence="2">
    <location>
        <begin position="281"/>
        <end position="303"/>
    </location>
</feature>
<feature type="repeat" description="Solcar 1">
    <location>
        <begin position="2"/>
        <end position="98"/>
    </location>
</feature>
<feature type="repeat" description="Solcar 2">
    <location>
        <begin position="118"/>
        <end position="206"/>
    </location>
</feature>
<feature type="modified residue" description="N-acetylalanine" evidence="8 9">
    <location>
        <position position="2"/>
    </location>
</feature>
<feature type="sequence variant" id="VAR_050128" description="In dbSNP:rs34072236.">
    <original>R</original>
    <variation>S</variation>
    <location>
        <position position="68"/>
    </location>
</feature>
<feature type="sequence variant" id="VAR_050129" description="In dbSNP:rs1064608.">
    <original>P</original>
    <variation>A</variation>
    <location>
        <position position="290"/>
    </location>
</feature>
<feature type="mutagenesis site" description="Hyperactive mutant with enhanced protein insertase activity." evidence="3">
    <original>K</original>
    <variation>E</variation>
    <location>
        <position position="25"/>
    </location>
</feature>
<feature type="mutagenesis site" description="Abolished protein insertase activity." evidence="3">
    <original>D</original>
    <variation>R</variation>
    <location>
        <position position="189"/>
    </location>
</feature>
<accession>Q9Y6C9</accession>
<accession>B2R7L8</accession>
<comment type="function">
    <text evidence="1 3">Protein insertase that mediates insertion of transmembrane proteins into the mitochondrial outer membrane (PubMed:36264797). Catalyzes insertion of proteins with alpha-helical transmembrane regions, such as signal-anchored, tail-anchored and multi-pass membrane proteins (PubMed:36264797). Does not mediate insertion of beta-barrel transmembrane proteins (PubMed:36264797). Also acts as a receptor for the truncated form of pro-apoptotic BH3-interacting domain death agonist (p15 BID) and has therefore a critical function in apoptosis (By similarity). Regulates the quiescence/cycling of hematopoietic stem cells (HSCs) (By similarity). Acts as a regulator of mitochondrial fusion, essential for the naive-to-primed interconversion of embryonic stem cells (ESCs) (By similarity). Acts as a regulator of lipid homeostasis and has a regulatory role in adipocyte differentiation and biology (By similarity).</text>
</comment>
<comment type="subunit">
    <text evidence="1">Interacts with p15BID.</text>
</comment>
<comment type="interaction">
    <interactant intactId="EBI-6164522">
        <id>Q9Y6C9</id>
    </interactant>
    <interactant intactId="EBI-1220105">
        <id>P02654</id>
        <label>APOC1</label>
    </interactant>
    <organismsDiffer>false</organismsDiffer>
    <experiments>3</experiments>
</comment>
<comment type="interaction">
    <interactant intactId="EBI-6164522">
        <id>Q9Y6C9</id>
    </interactant>
    <interactant intactId="EBI-17870477">
        <id>P56378-2</id>
        <label>ATP5MPL</label>
    </interactant>
    <organismsDiffer>false</organismsDiffer>
    <experiments>3</experiments>
</comment>
<comment type="subcellular location">
    <subcellularLocation>
        <location evidence="3">Mitochondrion outer membrane</location>
        <topology evidence="2">Multi-pass membrane protein</topology>
    </subcellularLocation>
</comment>
<comment type="similarity">
    <text evidence="6">Belongs to the mitochondrial carrier (TC 2.A.29) family.</text>
</comment>
<organism>
    <name type="scientific">Homo sapiens</name>
    <name type="common">Human</name>
    <dbReference type="NCBI Taxonomy" id="9606"/>
    <lineage>
        <taxon>Eukaryota</taxon>
        <taxon>Metazoa</taxon>
        <taxon>Chordata</taxon>
        <taxon>Craniata</taxon>
        <taxon>Vertebrata</taxon>
        <taxon>Euteleostomi</taxon>
        <taxon>Mammalia</taxon>
        <taxon>Eutheria</taxon>
        <taxon>Euarchontoglires</taxon>
        <taxon>Primates</taxon>
        <taxon>Haplorrhini</taxon>
        <taxon>Catarrhini</taxon>
        <taxon>Hominidae</taxon>
        <taxon>Homo</taxon>
    </lineage>
</organism>
<dbReference type="EMBL" id="AY380792">
    <property type="protein sequence ID" value="AAQ88168.1"/>
    <property type="molecule type" value="mRNA"/>
</dbReference>
<dbReference type="EMBL" id="AF176008">
    <property type="protein sequence ID" value="AAD52646.1"/>
    <property type="molecule type" value="mRNA"/>
</dbReference>
<dbReference type="EMBL" id="AF085361">
    <property type="protein sequence ID" value="AAD40196.1"/>
    <property type="molecule type" value="mRNA"/>
</dbReference>
<dbReference type="EMBL" id="AK313032">
    <property type="protein sequence ID" value="BAG35865.1"/>
    <property type="molecule type" value="mRNA"/>
</dbReference>
<dbReference type="EMBL" id="CH471064">
    <property type="protein sequence ID" value="EAW67892.1"/>
    <property type="molecule type" value="Genomic_DNA"/>
</dbReference>
<dbReference type="EMBL" id="BC000875">
    <property type="protein sequence ID" value="AAH00875.1"/>
    <property type="molecule type" value="mRNA"/>
</dbReference>
<dbReference type="CCDS" id="CCDS7943.1"/>
<dbReference type="RefSeq" id="NP_001304160.1">
    <property type="nucleotide sequence ID" value="NM_001317231.1"/>
</dbReference>
<dbReference type="RefSeq" id="NP_001304161.1">
    <property type="nucleotide sequence ID" value="NM_001317232.1"/>
</dbReference>
<dbReference type="RefSeq" id="NP_001304162.1">
    <property type="nucleotide sequence ID" value="NM_001317233.1"/>
</dbReference>
<dbReference type="RefSeq" id="NP_055157.1">
    <property type="nucleotide sequence ID" value="NM_014342.4"/>
</dbReference>
<dbReference type="SMR" id="Q9Y6C9"/>
<dbReference type="BioGRID" id="117287">
    <property type="interactions" value="429"/>
</dbReference>
<dbReference type="FunCoup" id="Q9Y6C9">
    <property type="interactions" value="3257"/>
</dbReference>
<dbReference type="IntAct" id="Q9Y6C9">
    <property type="interactions" value="85"/>
</dbReference>
<dbReference type="MINT" id="Q9Y6C9"/>
<dbReference type="STRING" id="9606.ENSP00000303222"/>
<dbReference type="ChEMBL" id="CHEMBL4523511"/>
<dbReference type="TCDB" id="2.A.29.25.2">
    <property type="family name" value="the mitochondrial carrier (mc) family"/>
</dbReference>
<dbReference type="GlyGen" id="Q9Y6C9">
    <property type="glycosylation" value="1 site, 1 O-linked glycan (1 site)"/>
</dbReference>
<dbReference type="iPTMnet" id="Q9Y6C9"/>
<dbReference type="MetOSite" id="Q9Y6C9"/>
<dbReference type="PhosphoSitePlus" id="Q9Y6C9"/>
<dbReference type="SwissPalm" id="Q9Y6C9"/>
<dbReference type="BioMuta" id="MTCH2"/>
<dbReference type="DMDM" id="67461088"/>
<dbReference type="jPOST" id="Q9Y6C9"/>
<dbReference type="MassIVE" id="Q9Y6C9"/>
<dbReference type="PaxDb" id="9606-ENSP00000303222"/>
<dbReference type="PeptideAtlas" id="Q9Y6C9"/>
<dbReference type="ProteomicsDB" id="86652"/>
<dbReference type="Pumba" id="Q9Y6C9"/>
<dbReference type="TopDownProteomics" id="Q9Y6C9"/>
<dbReference type="Antibodypedia" id="26842">
    <property type="antibodies" value="229 antibodies from 32 providers"/>
</dbReference>
<dbReference type="DNASU" id="23788"/>
<dbReference type="Ensembl" id="ENST00000302503.8">
    <property type="protein sequence ID" value="ENSP00000303222.3"/>
    <property type="gene ID" value="ENSG00000109919.10"/>
</dbReference>
<dbReference type="Ensembl" id="ENST00000643223.2">
    <property type="protein sequence ID" value="ENSP00000495027.1"/>
    <property type="gene ID" value="ENSG00000285121.2"/>
</dbReference>
<dbReference type="GeneID" id="23788"/>
<dbReference type="KEGG" id="hsa:23788"/>
<dbReference type="MANE-Select" id="ENST00000302503.8">
    <property type="protein sequence ID" value="ENSP00000303222.3"/>
    <property type="RefSeq nucleotide sequence ID" value="NM_014342.4"/>
    <property type="RefSeq protein sequence ID" value="NP_055157.1"/>
</dbReference>
<dbReference type="UCSC" id="uc010rho.3">
    <property type="organism name" value="human"/>
</dbReference>
<dbReference type="AGR" id="HGNC:17587"/>
<dbReference type="CTD" id="23788"/>
<dbReference type="DisGeNET" id="23788"/>
<dbReference type="GeneCards" id="MTCH2"/>
<dbReference type="HGNC" id="HGNC:17587">
    <property type="gene designation" value="MTCH2"/>
</dbReference>
<dbReference type="HPA" id="ENSG00000109919">
    <property type="expression patterns" value="Low tissue specificity"/>
</dbReference>
<dbReference type="MIM" id="613221">
    <property type="type" value="gene"/>
</dbReference>
<dbReference type="neXtProt" id="NX_Q9Y6C9"/>
<dbReference type="OpenTargets" id="ENSG00000109919"/>
<dbReference type="PharmGKB" id="PA134951260"/>
<dbReference type="VEuPathDB" id="HostDB:ENSG00000109919"/>
<dbReference type="eggNOG" id="KOG2745">
    <property type="taxonomic scope" value="Eukaryota"/>
</dbReference>
<dbReference type="GeneTree" id="ENSGT00390000000020"/>
<dbReference type="InParanoid" id="Q9Y6C9"/>
<dbReference type="OMA" id="HPFHVIA"/>
<dbReference type="OrthoDB" id="10253709at2759"/>
<dbReference type="PAN-GO" id="Q9Y6C9">
    <property type="GO annotations" value="3 GO annotations based on evolutionary models"/>
</dbReference>
<dbReference type="PhylomeDB" id="Q9Y6C9"/>
<dbReference type="TreeFam" id="TF313721"/>
<dbReference type="PathwayCommons" id="Q9Y6C9"/>
<dbReference type="SignaLink" id="Q9Y6C9"/>
<dbReference type="SIGNOR" id="Q9Y6C9"/>
<dbReference type="BioGRID-ORCS" id="23788">
    <property type="hits" value="87 hits in 1162 CRISPR screens"/>
</dbReference>
<dbReference type="CD-CODE" id="FB4E32DD">
    <property type="entry name" value="Presynaptic clusters and postsynaptic densities"/>
</dbReference>
<dbReference type="ChiTaRS" id="MTCH2">
    <property type="organism name" value="human"/>
</dbReference>
<dbReference type="GeneWiki" id="MTCH2"/>
<dbReference type="GenomeRNAi" id="23788"/>
<dbReference type="Pharos" id="Q9Y6C9">
    <property type="development level" value="Tbio"/>
</dbReference>
<dbReference type="PRO" id="PR:Q9Y6C9"/>
<dbReference type="Proteomes" id="UP000005640">
    <property type="component" value="Chromosome 11"/>
</dbReference>
<dbReference type="RNAct" id="Q9Y6C9">
    <property type="molecule type" value="protein"/>
</dbReference>
<dbReference type="Bgee" id="ENSG00000109919">
    <property type="expression patterns" value="Expressed in left testis and 104 other cell types or tissues"/>
</dbReference>
<dbReference type="ExpressionAtlas" id="Q9Y6C9">
    <property type="expression patterns" value="baseline and differential"/>
</dbReference>
<dbReference type="GO" id="GO:0016020">
    <property type="term" value="C:membrane"/>
    <property type="evidence" value="ECO:0007005"/>
    <property type="project" value="UniProtKB"/>
</dbReference>
<dbReference type="GO" id="GO:0005741">
    <property type="term" value="C:mitochondrial outer membrane"/>
    <property type="evidence" value="ECO:0000314"/>
    <property type="project" value="UniProtKB"/>
</dbReference>
<dbReference type="GO" id="GO:0005739">
    <property type="term" value="C:mitochondrion"/>
    <property type="evidence" value="ECO:0006056"/>
    <property type="project" value="FlyBase"/>
</dbReference>
<dbReference type="GO" id="GO:0005634">
    <property type="term" value="C:nucleus"/>
    <property type="evidence" value="ECO:0007005"/>
    <property type="project" value="UniProtKB"/>
</dbReference>
<dbReference type="GO" id="GO:0032977">
    <property type="term" value="F:membrane insertase activity"/>
    <property type="evidence" value="ECO:0000314"/>
    <property type="project" value="UniProtKB"/>
</dbReference>
<dbReference type="GO" id="GO:0071478">
    <property type="term" value="P:cellular response to radiation"/>
    <property type="evidence" value="ECO:0007669"/>
    <property type="project" value="Ensembl"/>
</dbReference>
<dbReference type="GO" id="GO:0090152">
    <property type="term" value="P:establishment of protein localization to mitochondrial membrane involved in mitochondrial fission"/>
    <property type="evidence" value="ECO:0007669"/>
    <property type="project" value="Ensembl"/>
</dbReference>
<dbReference type="GO" id="GO:0061484">
    <property type="term" value="P:hematopoietic stem cell homeostasis"/>
    <property type="evidence" value="ECO:0007669"/>
    <property type="project" value="Ensembl"/>
</dbReference>
<dbReference type="GO" id="GO:0035701">
    <property type="term" value="P:hematopoietic stem cell migration"/>
    <property type="evidence" value="ECO:0007669"/>
    <property type="project" value="Ensembl"/>
</dbReference>
<dbReference type="GO" id="GO:0097284">
    <property type="term" value="P:hepatocyte apoptotic process"/>
    <property type="evidence" value="ECO:0007669"/>
    <property type="project" value="Ensembl"/>
</dbReference>
<dbReference type="GO" id="GO:0006089">
    <property type="term" value="P:lactate metabolic process"/>
    <property type="evidence" value="ECO:0007669"/>
    <property type="project" value="Ensembl"/>
</dbReference>
<dbReference type="GO" id="GO:0055088">
    <property type="term" value="P:lipid homeostasis"/>
    <property type="evidence" value="ECO:0000250"/>
    <property type="project" value="UniProtKB"/>
</dbReference>
<dbReference type="GO" id="GO:0042775">
    <property type="term" value="P:mitochondrial ATP synthesis coupled electron transport"/>
    <property type="evidence" value="ECO:0007669"/>
    <property type="project" value="Ensembl"/>
</dbReference>
<dbReference type="GO" id="GO:0045820">
    <property type="term" value="P:negative regulation of glycolytic process"/>
    <property type="evidence" value="ECO:0007669"/>
    <property type="project" value="Ensembl"/>
</dbReference>
<dbReference type="GO" id="GO:0010917">
    <property type="term" value="P:negative regulation of mitochondrial membrane potential"/>
    <property type="evidence" value="ECO:0007669"/>
    <property type="project" value="Ensembl"/>
</dbReference>
<dbReference type="GO" id="GO:0043065">
    <property type="term" value="P:positive regulation of apoptotic process"/>
    <property type="evidence" value="ECO:0000250"/>
    <property type="project" value="UniProtKB"/>
</dbReference>
<dbReference type="GO" id="GO:1902231">
    <property type="term" value="P:positive regulation of intrinsic apoptotic signaling pathway in response to DNA damage"/>
    <property type="evidence" value="ECO:0007669"/>
    <property type="project" value="Ensembl"/>
</dbReference>
<dbReference type="GO" id="GO:2000738">
    <property type="term" value="P:positive regulation of stem cell differentiation"/>
    <property type="evidence" value="ECO:0000250"/>
    <property type="project" value="UniProtKB"/>
</dbReference>
<dbReference type="GO" id="GO:0045040">
    <property type="term" value="P:protein insertion into mitochondrial outer membrane"/>
    <property type="evidence" value="ECO:0000314"/>
    <property type="project" value="UniProtKB"/>
</dbReference>
<dbReference type="GO" id="GO:0070585">
    <property type="term" value="P:protein localization to mitochondrion"/>
    <property type="evidence" value="ECO:0000315"/>
    <property type="project" value="MGI"/>
</dbReference>
<dbReference type="GO" id="GO:0010635">
    <property type="term" value="P:regulation of mitochondrial fusion"/>
    <property type="evidence" value="ECO:0000250"/>
    <property type="project" value="UniProtKB"/>
</dbReference>
<dbReference type="GO" id="GO:1902108">
    <property type="term" value="P:regulation of mitochondrial membrane permeability involved in apoptotic process"/>
    <property type="evidence" value="ECO:0007669"/>
    <property type="project" value="Ensembl"/>
</dbReference>
<dbReference type="FunFam" id="1.50.40.10:FF:000035">
    <property type="entry name" value="Mitochondrial carrier homolog 2 variant"/>
    <property type="match status" value="1"/>
</dbReference>
<dbReference type="Gene3D" id="1.50.40.10">
    <property type="entry name" value="Mitochondrial carrier domain"/>
    <property type="match status" value="1"/>
</dbReference>
<dbReference type="InterPro" id="IPR018108">
    <property type="entry name" value="Mitochondrial_sb/sol_carrier"/>
</dbReference>
<dbReference type="InterPro" id="IPR023395">
    <property type="entry name" value="Mt_carrier_dom_sf"/>
</dbReference>
<dbReference type="PANTHER" id="PTHR10780">
    <property type="entry name" value="MITOCHONDRIAL CARRIER HOMOLOG"/>
    <property type="match status" value="1"/>
</dbReference>
<dbReference type="PANTHER" id="PTHR10780:SF20">
    <property type="entry name" value="MITOCHONDRIAL CARRIER HOMOLOG 2"/>
    <property type="match status" value="1"/>
</dbReference>
<dbReference type="Pfam" id="PF00153">
    <property type="entry name" value="Mito_carr"/>
    <property type="match status" value="1"/>
</dbReference>
<dbReference type="SUPFAM" id="SSF103506">
    <property type="entry name" value="Mitochondrial carrier"/>
    <property type="match status" value="1"/>
</dbReference>
<dbReference type="PROSITE" id="PS50920">
    <property type="entry name" value="SOLCAR"/>
    <property type="match status" value="2"/>
</dbReference>
<sequence length="303" mass="33331">MADAASQVLLGSGLTILSQPLMYVKVLIQVGYEPLPPTIGRNIFGRQVCQLPGLFSYAQHIASIDGRRGLFTGLTPRLCSGVLGTVVHGKVLQHYQESDKGEELGPGNVQKEVSSSFDHVIKETTREMIARSAATLITHPFHVITLRSMVQFIGRESKYCGLCDSIITIYREEGILGFFAGLVPRLLGDILSLWLCNSLAYLVNTYALDSGVSTMNEMKSYSQAVTGFFASMLTYPFVLVSNLMAVNNCGLAGGCPPYSPIYTSWIDCWCMLQKEGNMSRGNSLFFRKVPFGKTYCCDLKMLI</sequence>
<proteinExistence type="evidence at protein level"/>
<keyword id="KW-0007">Acetylation</keyword>
<keyword id="KW-0903">Direct protein sequencing</keyword>
<keyword id="KW-0472">Membrane</keyword>
<keyword id="KW-0496">Mitochondrion</keyword>
<keyword id="KW-1000">Mitochondrion outer membrane</keyword>
<keyword id="KW-1267">Proteomics identification</keyword>
<keyword id="KW-1185">Reference proteome</keyword>
<keyword id="KW-0677">Repeat</keyword>
<keyword id="KW-0812">Transmembrane</keyword>
<keyword id="KW-1133">Transmembrane helix</keyword>
<keyword id="KW-0813">Transport</keyword>
<evidence type="ECO:0000250" key="1">
    <source>
        <dbReference type="UniProtKB" id="Q791V5"/>
    </source>
</evidence>
<evidence type="ECO:0000255" key="2"/>
<evidence type="ECO:0000269" key="3">
    <source>
    </source>
</evidence>
<evidence type="ECO:0000303" key="4">
    <source>
    </source>
</evidence>
<evidence type="ECO:0000303" key="5">
    <source>
    </source>
</evidence>
<evidence type="ECO:0000305" key="6"/>
<evidence type="ECO:0000312" key="7">
    <source>
        <dbReference type="HGNC" id="HGNC:17587"/>
    </source>
</evidence>
<evidence type="ECO:0007744" key="8">
    <source>
    </source>
</evidence>
<evidence type="ECO:0007744" key="9">
    <source>
    </source>
</evidence>
<protein>
    <recommendedName>
        <fullName>Mitochondrial carrier homolog 2</fullName>
    </recommendedName>
    <alternativeName>
        <fullName evidence="4">Met-induced mitochondrial protein</fullName>
    </alternativeName>
</protein>